<protein>
    <recommendedName>
        <fullName evidence="1">Cytochrome b6-f complex subunit 6</fullName>
    </recommendedName>
    <alternativeName>
        <fullName evidence="1">Cytochrome b6-f complex subunit PetL</fullName>
    </alternativeName>
    <alternativeName>
        <fullName evidence="1">Cytochrome b6-f complex subunit VI</fullName>
    </alternativeName>
</protein>
<feature type="chain" id="PRO_0000220434" description="Cytochrome b6-f complex subunit 6">
    <location>
        <begin position="1"/>
        <end position="31"/>
    </location>
</feature>
<feature type="transmembrane region" description="Helical" evidence="1">
    <location>
        <begin position="4"/>
        <end position="26"/>
    </location>
</feature>
<evidence type="ECO:0000255" key="1">
    <source>
        <dbReference type="HAMAP-Rule" id="MF_00433"/>
    </source>
</evidence>
<evidence type="ECO:0000269" key="2">
    <source>
    </source>
</evidence>
<sequence>MLTLTSYFGFLLAALTITSALFIGLNKIRLI</sequence>
<accession>Q5K3T3</accession>
<dbReference type="EMBL" id="AJ704431">
    <property type="protein sequence ID" value="CAG28643.1"/>
    <property type="molecule type" value="Genomic_DNA"/>
</dbReference>
<dbReference type="SMR" id="Q5K3T3"/>
<dbReference type="GO" id="GO:0009535">
    <property type="term" value="C:chloroplast thylakoid membrane"/>
    <property type="evidence" value="ECO:0007669"/>
    <property type="project" value="UniProtKB-SubCell"/>
</dbReference>
<dbReference type="GO" id="GO:0009512">
    <property type="term" value="C:cytochrome b6f complex"/>
    <property type="evidence" value="ECO:0007669"/>
    <property type="project" value="InterPro"/>
</dbReference>
<dbReference type="GO" id="GO:0045158">
    <property type="term" value="F:electron transporter, transferring electrons within cytochrome b6/f complex of photosystem II activity"/>
    <property type="evidence" value="ECO:0007669"/>
    <property type="project" value="UniProtKB-UniRule"/>
</dbReference>
<dbReference type="GO" id="GO:0015979">
    <property type="term" value="P:photosynthesis"/>
    <property type="evidence" value="ECO:0007669"/>
    <property type="project" value="UniProtKB-KW"/>
</dbReference>
<dbReference type="HAMAP" id="MF_00433">
    <property type="entry name" value="Cytb6_f_PetL"/>
    <property type="match status" value="1"/>
</dbReference>
<dbReference type="InterPro" id="IPR007802">
    <property type="entry name" value="Cyt_b6/f_cplx_su6"/>
</dbReference>
<dbReference type="PANTHER" id="PTHR37266">
    <property type="entry name" value="CYTOCHROME B6-F COMPLEX SUBUNIT 6"/>
    <property type="match status" value="1"/>
</dbReference>
<dbReference type="PANTHER" id="PTHR37266:SF1">
    <property type="entry name" value="CYTOCHROME B6-F COMPLEX SUBUNIT 6"/>
    <property type="match status" value="1"/>
</dbReference>
<dbReference type="Pfam" id="PF05115">
    <property type="entry name" value="PetL"/>
    <property type="match status" value="1"/>
</dbReference>
<dbReference type="SUPFAM" id="SSF103436">
    <property type="entry name" value="PetL subunit of the cytochrome b6f complex"/>
    <property type="match status" value="1"/>
</dbReference>
<geneLocation type="chloroplast"/>
<name>PETL_AMACA</name>
<keyword id="KW-0150">Chloroplast</keyword>
<keyword id="KW-0249">Electron transport</keyword>
<keyword id="KW-0472">Membrane</keyword>
<keyword id="KW-0602">Photosynthesis</keyword>
<keyword id="KW-0934">Plastid</keyword>
<keyword id="KW-0691">RNA editing</keyword>
<keyword id="KW-0793">Thylakoid</keyword>
<keyword id="KW-0812">Transmembrane</keyword>
<keyword id="KW-1133">Transmembrane helix</keyword>
<keyword id="KW-0813">Transport</keyword>
<reference key="1">
    <citation type="journal article" date="2004" name="Nucleic Acids Res.">
        <title>Rapid evolution of RNA editing sites in a small non-essential plastid gene.</title>
        <authorList>
            <person name="Fiebig A."/>
            <person name="Stegemann S."/>
            <person name="Bock R."/>
        </authorList>
    </citation>
    <scope>NUCLEOTIDE SEQUENCE [GENOMIC DNA]</scope>
    <scope>RNA EDITING</scope>
    <source>
        <tissue>Leaf</tissue>
    </source>
</reference>
<organism>
    <name type="scientific">Amaranthus caudatus</name>
    <name type="common">Love-lies-bleeding</name>
    <name type="synonym">Inca-wheat</name>
    <dbReference type="NCBI Taxonomy" id="3567"/>
    <lineage>
        <taxon>Eukaryota</taxon>
        <taxon>Viridiplantae</taxon>
        <taxon>Streptophyta</taxon>
        <taxon>Embryophyta</taxon>
        <taxon>Tracheophyta</taxon>
        <taxon>Spermatophyta</taxon>
        <taxon>Magnoliopsida</taxon>
        <taxon>eudicotyledons</taxon>
        <taxon>Gunneridae</taxon>
        <taxon>Pentapetalae</taxon>
        <taxon>Caryophyllales</taxon>
        <taxon>Amaranthaceae</taxon>
        <taxon>Amaranthus</taxon>
    </lineage>
</organism>
<proteinExistence type="evidence at transcript level"/>
<comment type="function">
    <text evidence="1">Component of the cytochrome b6-f complex, which mediates electron transfer between photosystem II (PSII) and photosystem I (PSI), cyclic electron flow around PSI, and state transitions. PetL is important for photoautotrophic growth as well as for electron transfer efficiency and stability of the cytochrome b6-f complex.</text>
</comment>
<comment type="subunit">
    <text evidence="1">The 4 large subunits of the cytochrome b6-f complex are cytochrome b6, subunit IV (17 kDa polypeptide, PetD), cytochrome f and the Rieske protein, while the 4 small subunits are PetG, PetL, PetM and PetN. The complex functions as a dimer.</text>
</comment>
<comment type="subcellular location">
    <subcellularLocation>
        <location evidence="1">Plastid</location>
        <location evidence="1">Chloroplast thylakoid membrane</location>
        <topology evidence="1">Single-pass membrane protein</topology>
    </subcellularLocation>
</comment>
<comment type="RNA editing">
    <location>
        <position position="2" evidence="2"/>
    </location>
</comment>
<comment type="similarity">
    <text evidence="1">Belongs to the PetL family.</text>
</comment>
<gene>
    <name evidence="1" type="primary">petL</name>
</gene>